<keyword id="KW-0312">Gluconeogenesis</keyword>
<keyword id="KW-0324">Glycolysis</keyword>
<keyword id="KW-0413">Isomerase</keyword>
<keyword id="KW-1185">Reference proteome</keyword>
<accession>Q38Z74</accession>
<protein>
    <recommendedName>
        <fullName evidence="1">2,3-bisphosphoglycerate-dependent phosphoglycerate mutase 2</fullName>
        <shortName evidence="1">BPG-dependent PGAM 2</shortName>
        <shortName evidence="1">PGAM 2</shortName>
        <shortName evidence="1">Phosphoglyceromutase 2</shortName>
        <shortName evidence="1">dPGM 2</shortName>
        <ecNumber evidence="1">5.4.2.11</ecNumber>
    </recommendedName>
</protein>
<organism>
    <name type="scientific">Latilactobacillus sakei subsp. sakei (strain 23K)</name>
    <name type="common">Lactobacillus sakei subsp. sakei</name>
    <dbReference type="NCBI Taxonomy" id="314315"/>
    <lineage>
        <taxon>Bacteria</taxon>
        <taxon>Bacillati</taxon>
        <taxon>Bacillota</taxon>
        <taxon>Bacilli</taxon>
        <taxon>Lactobacillales</taxon>
        <taxon>Lactobacillaceae</taxon>
        <taxon>Latilactobacillus</taxon>
    </lineage>
</organism>
<feature type="chain" id="PRO_0000229125" description="2,3-bisphosphoglycerate-dependent phosphoglycerate mutase 2">
    <location>
        <begin position="1"/>
        <end position="229"/>
    </location>
</feature>
<feature type="active site" description="Tele-phosphohistidine intermediate" evidence="1">
    <location>
        <position position="9"/>
    </location>
</feature>
<feature type="active site" description="Proton donor/acceptor" evidence="1">
    <location>
        <position position="87"/>
    </location>
</feature>
<feature type="binding site" evidence="1">
    <location>
        <begin position="8"/>
        <end position="15"/>
    </location>
    <ligand>
        <name>substrate</name>
    </ligand>
</feature>
<feature type="binding site" evidence="1">
    <location>
        <begin position="21"/>
        <end position="22"/>
    </location>
    <ligand>
        <name>substrate</name>
    </ligand>
</feature>
<feature type="binding site" evidence="1">
    <location>
        <position position="60"/>
    </location>
    <ligand>
        <name>substrate</name>
    </ligand>
</feature>
<feature type="binding site" evidence="1">
    <location>
        <begin position="87"/>
        <end position="90"/>
    </location>
    <ligand>
        <name>substrate</name>
    </ligand>
</feature>
<feature type="binding site" evidence="1">
    <location>
        <position position="98"/>
    </location>
    <ligand>
        <name>substrate</name>
    </ligand>
</feature>
<feature type="binding site" evidence="1">
    <location>
        <begin position="114"/>
        <end position="115"/>
    </location>
    <ligand>
        <name>substrate</name>
    </ligand>
</feature>
<feature type="binding site" evidence="1">
    <location>
        <begin position="183"/>
        <end position="184"/>
    </location>
    <ligand>
        <name>substrate</name>
    </ligand>
</feature>
<feature type="site" description="Transition state stabilizer" evidence="1">
    <location>
        <position position="182"/>
    </location>
</feature>
<sequence>MAKLVFIRHGQSEWNLSNQFTGWVDVNLSEEGVRQAQNAGALLKKEGILFDQAYTSVLTRAIKTLHYALEGSDQLWIPETKSWRLNERHYGALQGQNKAEAAEKWGDEQVHIWRRSYDTLPPLLDASDEGSAANDRRYAHLDPKAIPGGENLKVTLERVIPFWEDEIAPKLIDGQNIIVAAHGNSLRALTKYIENISDEDIMDVEMATGEPVVYDLDENLNVVSKKKLN</sequence>
<reference key="1">
    <citation type="journal article" date="2005" name="Nat. Biotechnol.">
        <title>The complete genome sequence of the meat-borne lactic acid bacterium Lactobacillus sakei 23K.</title>
        <authorList>
            <person name="Chaillou S."/>
            <person name="Champomier-Verges M.-C."/>
            <person name="Cornet M."/>
            <person name="Crutz-Le Coq A.-M."/>
            <person name="Dudez A.-M."/>
            <person name="Martin V."/>
            <person name="Beaufils S."/>
            <person name="Darbon-Rongere E."/>
            <person name="Bossy R."/>
            <person name="Loux V."/>
            <person name="Zagorec M."/>
        </authorList>
    </citation>
    <scope>NUCLEOTIDE SEQUENCE [LARGE SCALE GENOMIC DNA]</scope>
    <source>
        <strain>23K</strain>
    </source>
</reference>
<evidence type="ECO:0000255" key="1">
    <source>
        <dbReference type="HAMAP-Rule" id="MF_01039"/>
    </source>
</evidence>
<comment type="function">
    <text evidence="1">Catalyzes the interconversion of 2-phosphoglycerate and 3-phosphoglycerate.</text>
</comment>
<comment type="catalytic activity">
    <reaction evidence="1">
        <text>(2R)-2-phosphoglycerate = (2R)-3-phosphoglycerate</text>
        <dbReference type="Rhea" id="RHEA:15901"/>
        <dbReference type="ChEBI" id="CHEBI:58272"/>
        <dbReference type="ChEBI" id="CHEBI:58289"/>
        <dbReference type="EC" id="5.4.2.11"/>
    </reaction>
</comment>
<comment type="pathway">
    <text evidence="1">Carbohydrate degradation; glycolysis; pyruvate from D-glyceraldehyde 3-phosphate: step 3/5.</text>
</comment>
<comment type="similarity">
    <text evidence="1">Belongs to the phosphoglycerate mutase family. BPG-dependent PGAM subfamily.</text>
</comment>
<dbReference type="EC" id="5.4.2.11" evidence="1"/>
<dbReference type="EMBL" id="CR936503">
    <property type="protein sequence ID" value="CAI54503.1"/>
    <property type="molecule type" value="Genomic_DNA"/>
</dbReference>
<dbReference type="RefSeq" id="WP_011373916.1">
    <property type="nucleotide sequence ID" value="NC_007576.1"/>
</dbReference>
<dbReference type="SMR" id="Q38Z74"/>
<dbReference type="STRING" id="314315.LCA_0206"/>
<dbReference type="GeneID" id="57133016"/>
<dbReference type="KEGG" id="lsa:LCA_0206"/>
<dbReference type="eggNOG" id="COG0588">
    <property type="taxonomic scope" value="Bacteria"/>
</dbReference>
<dbReference type="HOGENOM" id="CLU_033323_1_5_9"/>
<dbReference type="OrthoDB" id="9781415at2"/>
<dbReference type="UniPathway" id="UPA00109">
    <property type="reaction ID" value="UER00186"/>
</dbReference>
<dbReference type="Proteomes" id="UP000002707">
    <property type="component" value="Chromosome"/>
</dbReference>
<dbReference type="GO" id="GO:0004619">
    <property type="term" value="F:phosphoglycerate mutase activity"/>
    <property type="evidence" value="ECO:0007669"/>
    <property type="project" value="UniProtKB-EC"/>
</dbReference>
<dbReference type="GO" id="GO:0006094">
    <property type="term" value="P:gluconeogenesis"/>
    <property type="evidence" value="ECO:0007669"/>
    <property type="project" value="UniProtKB-UniRule"/>
</dbReference>
<dbReference type="GO" id="GO:0006096">
    <property type="term" value="P:glycolytic process"/>
    <property type="evidence" value="ECO:0007669"/>
    <property type="project" value="UniProtKB-UniRule"/>
</dbReference>
<dbReference type="CDD" id="cd07067">
    <property type="entry name" value="HP_PGM_like"/>
    <property type="match status" value="1"/>
</dbReference>
<dbReference type="FunFam" id="3.40.50.1240:FF:000003">
    <property type="entry name" value="2,3-bisphosphoglycerate-dependent phosphoglycerate mutase"/>
    <property type="match status" value="1"/>
</dbReference>
<dbReference type="Gene3D" id="3.40.50.1240">
    <property type="entry name" value="Phosphoglycerate mutase-like"/>
    <property type="match status" value="1"/>
</dbReference>
<dbReference type="HAMAP" id="MF_01039">
    <property type="entry name" value="PGAM_GpmA"/>
    <property type="match status" value="1"/>
</dbReference>
<dbReference type="InterPro" id="IPR013078">
    <property type="entry name" value="His_Pase_superF_clade-1"/>
</dbReference>
<dbReference type="InterPro" id="IPR029033">
    <property type="entry name" value="His_PPase_superfam"/>
</dbReference>
<dbReference type="InterPro" id="IPR005952">
    <property type="entry name" value="Phosphogly_mut1"/>
</dbReference>
<dbReference type="NCBIfam" id="TIGR01258">
    <property type="entry name" value="pgm_1"/>
    <property type="match status" value="1"/>
</dbReference>
<dbReference type="NCBIfam" id="NF010713">
    <property type="entry name" value="PRK14115.1"/>
    <property type="match status" value="1"/>
</dbReference>
<dbReference type="NCBIfam" id="NF010714">
    <property type="entry name" value="PRK14116.1"/>
    <property type="match status" value="1"/>
</dbReference>
<dbReference type="PANTHER" id="PTHR11931">
    <property type="entry name" value="PHOSPHOGLYCERATE MUTASE"/>
    <property type="match status" value="1"/>
</dbReference>
<dbReference type="Pfam" id="PF00300">
    <property type="entry name" value="His_Phos_1"/>
    <property type="match status" value="2"/>
</dbReference>
<dbReference type="PIRSF" id="PIRSF000709">
    <property type="entry name" value="6PFK_2-Ptase"/>
    <property type="match status" value="1"/>
</dbReference>
<dbReference type="SMART" id="SM00855">
    <property type="entry name" value="PGAM"/>
    <property type="match status" value="1"/>
</dbReference>
<dbReference type="SUPFAM" id="SSF53254">
    <property type="entry name" value="Phosphoglycerate mutase-like"/>
    <property type="match status" value="1"/>
</dbReference>
<gene>
    <name evidence="1" type="primary">gpmA2</name>
    <name type="ordered locus">LCA_0206</name>
</gene>
<name>GPMA2_LATSS</name>
<proteinExistence type="inferred from homology"/>